<proteinExistence type="evidence at protein level"/>
<organism>
    <name type="scientific">Streptomyces clavuligerus</name>
    <dbReference type="NCBI Taxonomy" id="1901"/>
    <lineage>
        <taxon>Bacteria</taxon>
        <taxon>Bacillati</taxon>
        <taxon>Actinomycetota</taxon>
        <taxon>Actinomycetes</taxon>
        <taxon>Kitasatosporales</taxon>
        <taxon>Streptomycetaceae</taxon>
        <taxon>Streptomyces</taxon>
    </lineage>
</organism>
<dbReference type="EC" id="6.3.3.4"/>
<dbReference type="EMBL" id="AF071051">
    <property type="protein sequence ID" value="AAC31901.1"/>
    <property type="molecule type" value="Genomic_DNA"/>
</dbReference>
<dbReference type="EMBL" id="U87786">
    <property type="protein sequence ID" value="AAF86620.1"/>
    <property type="molecule type" value="Genomic_DNA"/>
</dbReference>
<dbReference type="EMBL" id="X84101">
    <property type="protein sequence ID" value="CAA58903.1"/>
    <property type="molecule type" value="Genomic_DNA"/>
</dbReference>
<dbReference type="PIR" id="S57668">
    <property type="entry name" value="S57668"/>
</dbReference>
<dbReference type="RefSeq" id="WP_003952510.1">
    <property type="nucleotide sequence ID" value="NZ_CM000913.1"/>
</dbReference>
<dbReference type="PDB" id="1JGT">
    <property type="method" value="X-ray"/>
    <property type="resolution" value="1.95 A"/>
    <property type="chains" value="A/B=1-513"/>
</dbReference>
<dbReference type="PDB" id="1M1Z">
    <property type="method" value="X-ray"/>
    <property type="resolution" value="1.95 A"/>
    <property type="chains" value="A/B=1-513"/>
</dbReference>
<dbReference type="PDB" id="1MB9">
    <property type="method" value="X-ray"/>
    <property type="resolution" value="2.11 A"/>
    <property type="chains" value="A/B=1-513"/>
</dbReference>
<dbReference type="PDB" id="1MBZ">
    <property type="method" value="X-ray"/>
    <property type="resolution" value="2.47 A"/>
    <property type="chains" value="A/B=1-513"/>
</dbReference>
<dbReference type="PDB" id="1MC1">
    <property type="method" value="X-ray"/>
    <property type="resolution" value="2.16 A"/>
    <property type="chains" value="A/B=1-513"/>
</dbReference>
<dbReference type="PDBsum" id="1JGT"/>
<dbReference type="PDBsum" id="1M1Z"/>
<dbReference type="PDBsum" id="1MB9"/>
<dbReference type="PDBsum" id="1MBZ"/>
<dbReference type="PDBsum" id="1MC1"/>
<dbReference type="SMR" id="P0DJQ7"/>
<dbReference type="STRING" id="1901.BB341_07810"/>
<dbReference type="GeneID" id="93729325"/>
<dbReference type="KEGG" id="ag:AAC31901"/>
<dbReference type="eggNOG" id="COG0367">
    <property type="taxonomic scope" value="Bacteria"/>
</dbReference>
<dbReference type="OrthoDB" id="9763290at2"/>
<dbReference type="BioCyc" id="MetaCyc:MONOMER-13483"/>
<dbReference type="BRENDA" id="6.3.3.4">
    <property type="organism ID" value="5988"/>
</dbReference>
<dbReference type="UniPathway" id="UPA00112">
    <property type="reaction ID" value="UER00243"/>
</dbReference>
<dbReference type="EvolutionaryTrace" id="P0DJQ7"/>
<dbReference type="GO" id="GO:0005829">
    <property type="term" value="C:cytosol"/>
    <property type="evidence" value="ECO:0007669"/>
    <property type="project" value="TreeGrafter"/>
</dbReference>
<dbReference type="GO" id="GO:0034027">
    <property type="term" value="F:(carboxyethyl)arginine beta-lactam-synthase activity"/>
    <property type="evidence" value="ECO:0007669"/>
    <property type="project" value="UniProtKB-EC"/>
</dbReference>
<dbReference type="GO" id="GO:0004066">
    <property type="term" value="F:asparagine synthase (glutamine-hydrolyzing) activity"/>
    <property type="evidence" value="ECO:0007669"/>
    <property type="project" value="InterPro"/>
</dbReference>
<dbReference type="GO" id="GO:0005524">
    <property type="term" value="F:ATP binding"/>
    <property type="evidence" value="ECO:0007669"/>
    <property type="project" value="UniProtKB-KW"/>
</dbReference>
<dbReference type="GO" id="GO:0046872">
    <property type="term" value="F:metal ion binding"/>
    <property type="evidence" value="ECO:0007669"/>
    <property type="project" value="UniProtKB-KW"/>
</dbReference>
<dbReference type="GO" id="GO:0006529">
    <property type="term" value="P:asparagine biosynthetic process"/>
    <property type="evidence" value="ECO:0007669"/>
    <property type="project" value="InterPro"/>
</dbReference>
<dbReference type="GO" id="GO:0033050">
    <property type="term" value="P:clavulanic acid biosynthetic process"/>
    <property type="evidence" value="ECO:0007669"/>
    <property type="project" value="UniProtKB-UniPathway"/>
</dbReference>
<dbReference type="CDD" id="cd01991">
    <property type="entry name" value="Asn_synthase_B_C"/>
    <property type="match status" value="1"/>
</dbReference>
<dbReference type="Gene3D" id="3.60.20.10">
    <property type="entry name" value="Glutamine Phosphoribosylpyrophosphate, subunit 1, domain 1"/>
    <property type="match status" value="1"/>
</dbReference>
<dbReference type="Gene3D" id="3.40.50.620">
    <property type="entry name" value="HUPs"/>
    <property type="match status" value="1"/>
</dbReference>
<dbReference type="InterPro" id="IPR001962">
    <property type="entry name" value="Asn_synthase"/>
</dbReference>
<dbReference type="InterPro" id="IPR050795">
    <property type="entry name" value="Asn_Synthetase"/>
</dbReference>
<dbReference type="InterPro" id="IPR017932">
    <property type="entry name" value="GATase_2_dom"/>
</dbReference>
<dbReference type="InterPro" id="IPR029055">
    <property type="entry name" value="Ntn_hydrolases_N"/>
</dbReference>
<dbReference type="InterPro" id="IPR014729">
    <property type="entry name" value="Rossmann-like_a/b/a_fold"/>
</dbReference>
<dbReference type="PANTHER" id="PTHR11772">
    <property type="entry name" value="ASPARAGINE SYNTHETASE"/>
    <property type="match status" value="1"/>
</dbReference>
<dbReference type="PANTHER" id="PTHR11772:SF2">
    <property type="entry name" value="ASPARAGINE SYNTHETASE [GLUTAMINE-HYDROLYZING]"/>
    <property type="match status" value="1"/>
</dbReference>
<dbReference type="Pfam" id="PF00733">
    <property type="entry name" value="Asn_synthase"/>
    <property type="match status" value="2"/>
</dbReference>
<dbReference type="Pfam" id="PF13537">
    <property type="entry name" value="GATase_7"/>
    <property type="match status" value="1"/>
</dbReference>
<dbReference type="SUPFAM" id="SSF52402">
    <property type="entry name" value="Adenine nucleotide alpha hydrolases-like"/>
    <property type="match status" value="1"/>
</dbReference>
<dbReference type="SUPFAM" id="SSF56235">
    <property type="entry name" value="N-terminal nucleophile aminohydrolases (Ntn hydrolases)"/>
    <property type="match status" value="1"/>
</dbReference>
<name>BLS_STRCL</name>
<accession>P0DJQ7</accession>
<accession>P0DJQ8</accession>
<accession>Q53938</accession>
<accession>Q9R8E3</accession>
<feature type="chain" id="PRO_0000056939" description="Carboxyethyl-arginine beta-lactam-synthase">
    <location>
        <begin position="1"/>
        <end position="513"/>
    </location>
</feature>
<feature type="binding site">
    <location>
        <position position="253"/>
    </location>
    <ligand>
        <name>Mg(2+)</name>
        <dbReference type="ChEBI" id="CHEBI:18420"/>
    </ligand>
</feature>
<feature type="binding site">
    <location>
        <position position="351"/>
    </location>
    <ligand>
        <name>Mg(2+)</name>
        <dbReference type="ChEBI" id="CHEBI:18420"/>
    </ligand>
</feature>
<feature type="strand" evidence="2">
    <location>
        <begin position="10"/>
        <end position="18"/>
    </location>
</feature>
<feature type="strand" evidence="2">
    <location>
        <begin position="32"/>
        <end position="36"/>
    </location>
</feature>
<feature type="helix" evidence="2">
    <location>
        <begin position="42"/>
        <end position="44"/>
    </location>
</feature>
<feature type="strand" evidence="2">
    <location>
        <begin position="47"/>
        <end position="52"/>
    </location>
</feature>
<feature type="helix" evidence="2">
    <location>
        <begin position="58"/>
        <end position="61"/>
    </location>
</feature>
<feature type="strand" evidence="2">
    <location>
        <begin position="62"/>
        <end position="65"/>
    </location>
</feature>
<feature type="strand" evidence="2">
    <location>
        <begin position="67"/>
        <end position="80"/>
    </location>
</feature>
<feature type="helix" evidence="2">
    <location>
        <begin position="82"/>
        <end position="87"/>
    </location>
</feature>
<feature type="strand" evidence="4">
    <location>
        <begin position="89"/>
        <end position="92"/>
    </location>
</feature>
<feature type="helix" evidence="2">
    <location>
        <begin position="98"/>
        <end position="109"/>
    </location>
</feature>
<feature type="helix" evidence="2">
    <location>
        <begin position="110"/>
        <end position="115"/>
    </location>
</feature>
<feature type="strand" evidence="2">
    <location>
        <begin position="119"/>
        <end position="127"/>
    </location>
</feature>
<feature type="strand" evidence="2">
    <location>
        <begin position="130"/>
        <end position="135"/>
    </location>
</feature>
<feature type="strand" evidence="2">
    <location>
        <begin position="144"/>
        <end position="148"/>
    </location>
</feature>
<feature type="strand" evidence="2">
    <location>
        <begin position="151"/>
        <end position="156"/>
    </location>
</feature>
<feature type="helix" evidence="2">
    <location>
        <begin position="158"/>
        <end position="162"/>
    </location>
</feature>
<feature type="strand" evidence="4">
    <location>
        <begin position="164"/>
        <end position="166"/>
    </location>
</feature>
<feature type="strand" evidence="2">
    <location>
        <begin position="175"/>
        <end position="177"/>
    </location>
</feature>
<feature type="strand" evidence="2">
    <location>
        <begin position="191"/>
        <end position="196"/>
    </location>
</feature>
<feature type="turn" evidence="2">
    <location>
        <begin position="197"/>
        <end position="200"/>
    </location>
</feature>
<feature type="strand" evidence="2">
    <location>
        <begin position="201"/>
        <end position="206"/>
    </location>
</feature>
<feature type="helix" evidence="2">
    <location>
        <begin position="219"/>
        <end position="237"/>
    </location>
</feature>
<feature type="strand" evidence="5">
    <location>
        <begin position="240"/>
        <end position="242"/>
    </location>
</feature>
<feature type="strand" evidence="2">
    <location>
        <begin position="245"/>
        <end position="247"/>
    </location>
</feature>
<feature type="helix" evidence="2">
    <location>
        <begin position="252"/>
        <end position="265"/>
    </location>
</feature>
<feature type="strand" evidence="2">
    <location>
        <begin position="269"/>
        <end position="274"/>
    </location>
</feature>
<feature type="helix" evidence="2">
    <location>
        <begin position="281"/>
        <end position="291"/>
    </location>
</feature>
<feature type="strand" evidence="2">
    <location>
        <begin position="294"/>
        <end position="299"/>
    </location>
</feature>
<feature type="helix" evidence="2">
    <location>
        <begin position="302"/>
        <end position="306"/>
    </location>
</feature>
<feature type="helix" evidence="2">
    <location>
        <begin position="309"/>
        <end position="316"/>
    </location>
</feature>
<feature type="helix" evidence="2">
    <location>
        <begin position="321"/>
        <end position="336"/>
    </location>
</feature>
<feature type="strand" evidence="2">
    <location>
        <begin position="343"/>
        <end position="345"/>
    </location>
</feature>
<feature type="turn" evidence="2">
    <location>
        <begin position="348"/>
        <end position="350"/>
    </location>
</feature>
<feature type="helix" evidence="2">
    <location>
        <begin position="351"/>
        <end position="354"/>
    </location>
</feature>
<feature type="turn" evidence="2">
    <location>
        <begin position="355"/>
        <end position="357"/>
    </location>
</feature>
<feature type="helix" evidence="2">
    <location>
        <begin position="364"/>
        <end position="376"/>
    </location>
</feature>
<feature type="helix" evidence="2">
    <location>
        <begin position="386"/>
        <end position="389"/>
    </location>
</feature>
<feature type="turn" evidence="2">
    <location>
        <begin position="390"/>
        <end position="392"/>
    </location>
</feature>
<feature type="strand" evidence="2">
    <location>
        <begin position="394"/>
        <end position="396"/>
    </location>
</feature>
<feature type="helix" evidence="2">
    <location>
        <begin position="398"/>
        <end position="400"/>
    </location>
</feature>
<feature type="helix" evidence="2">
    <location>
        <begin position="402"/>
        <end position="410"/>
    </location>
</feature>
<feature type="helix" evidence="2">
    <location>
        <begin position="413"/>
        <end position="416"/>
    </location>
</feature>
<feature type="strand" evidence="5">
    <location>
        <begin position="421"/>
        <end position="423"/>
    </location>
</feature>
<feature type="helix" evidence="2">
    <location>
        <begin position="424"/>
        <end position="430"/>
    </location>
</feature>
<feature type="turn" evidence="2">
    <location>
        <begin position="431"/>
        <end position="433"/>
    </location>
</feature>
<feature type="helix" evidence="2">
    <location>
        <begin position="436"/>
        <end position="440"/>
    </location>
</feature>
<feature type="helix" evidence="6">
    <location>
        <begin position="446"/>
        <end position="449"/>
    </location>
</feature>
<feature type="helix" evidence="2">
    <location>
        <begin position="455"/>
        <end position="463"/>
    </location>
</feature>
<feature type="turn" evidence="6">
    <location>
        <begin position="467"/>
        <end position="469"/>
    </location>
</feature>
<feature type="helix" evidence="2">
    <location>
        <begin position="470"/>
        <end position="485"/>
    </location>
</feature>
<feature type="turn" evidence="3">
    <location>
        <begin position="486"/>
        <end position="488"/>
    </location>
</feature>
<feature type="helix" evidence="2">
    <location>
        <begin position="492"/>
        <end position="494"/>
    </location>
</feature>
<feature type="helix" evidence="2">
    <location>
        <begin position="497"/>
        <end position="505"/>
    </location>
</feature>
<gene>
    <name type="primary">bls</name>
</gene>
<evidence type="ECO:0000305" key="1"/>
<evidence type="ECO:0007829" key="2">
    <source>
        <dbReference type="PDB" id="1JGT"/>
    </source>
</evidence>
<evidence type="ECO:0007829" key="3">
    <source>
        <dbReference type="PDB" id="1M1Z"/>
    </source>
</evidence>
<evidence type="ECO:0007829" key="4">
    <source>
        <dbReference type="PDB" id="1MB9"/>
    </source>
</evidence>
<evidence type="ECO:0007829" key="5">
    <source>
        <dbReference type="PDB" id="1MBZ"/>
    </source>
</evidence>
<evidence type="ECO:0007829" key="6">
    <source>
        <dbReference type="PDB" id="1MC1"/>
    </source>
</evidence>
<sequence length="513" mass="54530">MGAPVLPAAFGFLASARTGGGRAPGPVFATRGSHTDIDTPQGERSLAATLVHAPSVAPDRAVARSLTGAPTTAVLAGEIYNRDELLSVLPAGPAPEGDAELVLRLLERYDLHAFRLVNGRFATVVRTGDRVLLATDHAGSVPLYTCVAPGEVRASTEAKALAAHRDPKGFPLADARRVAGLTGVYQVPAGAVMDIDLGSGTAVTHRTWTPGLSRRILPEGEAVAAVRAALEKAVAQRVTPGDTPLVVLSGGIDSSGVAACAHRAAGELDTVSMGTDTSNEFREARAVVDHLRTRHREITIPTTELLAQLPYAVWASESVDPDIIEYLLPLTALYRALDGPERRILTGYGADIPLGGMHREDRLPALDTVLAHDMATFDGLNEMSPVLSTLAGHWTTHPYWDREVLDLLVSLEAGLKRRHGRDKWVLRAAMADALPAETVNRPKLGVHEGSGTTSSFSRLLLDHGVAEDRVHEAKRQVVRELFDLTVGGGRHPSEVDTDDVVRSVADRTARGAA</sequence>
<keyword id="KW-0002">3D-structure</keyword>
<keyword id="KW-0067">ATP-binding</keyword>
<keyword id="KW-0436">Ligase</keyword>
<keyword id="KW-0460">Magnesium</keyword>
<keyword id="KW-0479">Metal-binding</keyword>
<keyword id="KW-0547">Nucleotide-binding</keyword>
<reference key="1">
    <citation type="journal article" date="1998" name="Proc. Natl. Acad. Sci. U.S.A.">
        <title>Beta-lactam synthetase: a new biosynthetic enzyme.</title>
        <authorList>
            <person name="Bachmann B.O."/>
            <person name="Li R."/>
            <person name="Townsend C.A."/>
        </authorList>
    </citation>
    <scope>NUCLEOTIDE SEQUENCE [GENOMIC DNA]</scope>
</reference>
<reference key="2">
    <citation type="journal article" date="2000" name="Antimicrob. Agents Chemother.">
        <title>Enzymes catalyzing the early steps of clavulanic acid biosynthesis are encoded by two sets of paralogous genes in Streptomyces clavuligerus.</title>
        <authorList>
            <person name="Jensen S.E."/>
            <person name="Elder K.J."/>
            <person name="Aidoo K.A."/>
            <person name="Paradkar A.S."/>
        </authorList>
    </citation>
    <scope>NUCLEOTIDE SEQUENCE [GENOMIC DNA]</scope>
    <source>
        <strain>ATCC 27064 / DSM 738 / JCM 4710 / NBRC 13307 / NCIMB 12785 / NRRL 3585 / VKM Ac-602</strain>
    </source>
</reference>
<reference key="3">
    <citation type="journal article" date="1995" name="Gene">
        <title>Clavulanic acid biosynthesis in Streptomyces clavuligerus: gene cloning and characterization.</title>
        <authorList>
            <person name="Hodgson J.E."/>
            <person name="Fosberry A.P."/>
            <person name="Rawlinson N.S."/>
            <person name="Ross H.N.M."/>
            <person name="Neal R.J."/>
            <person name="Arnell J.C."/>
            <person name="Earl A.J."/>
            <person name="Lawlor E.J."/>
        </authorList>
    </citation>
    <scope>NUCLEOTIDE SEQUENCE [GENOMIC DNA] OF 79-513</scope>
</reference>
<reference key="4">
    <citation type="journal article" date="2000" name="Biochemistry">
        <title>Kinetic mechanism of the beta-lactam synthetase of Streptomyces clavuligerus.</title>
        <authorList>
            <person name="Bachmann B.O."/>
            <person name="Townsend C.A."/>
        </authorList>
    </citation>
    <scope>CHARACTERIZATION</scope>
</reference>
<reference key="5">
    <citation type="journal article" date="2001" name="Nat. Struct. Biol.">
        <title>Structure of beta-lactam synthetase reveals how to synthesize antibiotics instead of asparagine.</title>
        <authorList>
            <person name="Miller M.T."/>
            <person name="Bachmann B.O."/>
            <person name="Townsend C.A."/>
            <person name="Rosenzweig A.C."/>
        </authorList>
    </citation>
    <scope>X-RAY CRYSTALLOGRAPHY (1.95 ANGSTROMS) OF 4-507</scope>
</reference>
<reference key="6">
    <citation type="journal article" date="2002" name="Proc. Natl. Acad. Sci. U.S.A.">
        <title>The catalytic cycle of beta -lactam synthetase observed by X-ray crystallographic snapshots.</title>
        <authorList>
            <person name="Miller M.T."/>
            <person name="Bachmann B.O."/>
            <person name="Townsend C.A."/>
            <person name="Rosenzweig A.C."/>
        </authorList>
    </citation>
    <scope>X-RAY CRYSTALLOGRAPHY (2.11 ANGSTROMS) OF 4-507</scope>
</reference>
<comment type="catalytic activity">
    <reaction>
        <text>N(2)-(2-carboxyethyl)-L-arginine + ATP = deoxyamidinoproclavaminate + AMP + diphosphate + H(+)</text>
        <dbReference type="Rhea" id="RHEA:23620"/>
        <dbReference type="ChEBI" id="CHEBI:15378"/>
        <dbReference type="ChEBI" id="CHEBI:30616"/>
        <dbReference type="ChEBI" id="CHEBI:33019"/>
        <dbReference type="ChEBI" id="CHEBI:57303"/>
        <dbReference type="ChEBI" id="CHEBI:57304"/>
        <dbReference type="ChEBI" id="CHEBI:456215"/>
        <dbReference type="EC" id="6.3.3.4"/>
    </reaction>
</comment>
<comment type="cofactor">
    <cofactor>
        <name>Mg(2+)</name>
        <dbReference type="ChEBI" id="CHEBI:18420"/>
    </cofactor>
    <text>Binds 1 Mg(2+) ion per subunit.</text>
</comment>
<comment type="pathway">
    <text>Antibiotic biosynthesis; clavulanate biosynthesis; clavulanate from D-glyceraldehyde 3-phosphate and L-arginine: step 2/8.</text>
</comment>
<comment type="subunit">
    <text>Homodimer.</text>
</comment>
<comment type="similarity">
    <text evidence="1">Belongs to the asparagine synthetase family.</text>
</comment>
<protein>
    <recommendedName>
        <fullName>Carboxyethyl-arginine beta-lactam-synthase</fullName>
        <ecNumber>6.3.3.4</ecNumber>
    </recommendedName>
    <alternativeName>
        <fullName>Beta-lactam synthetase</fullName>
    </alternativeName>
</protein>